<gene>
    <name evidence="1" type="primary">hypA</name>
    <name type="ordered locus">Msm_0108</name>
</gene>
<reference key="1">
    <citation type="journal article" date="2007" name="Proc. Natl. Acad. Sci. U.S.A.">
        <title>Genomic and metabolic adaptations of Methanobrevibacter smithii to the human gut.</title>
        <authorList>
            <person name="Samuel B.S."/>
            <person name="Hansen E.E."/>
            <person name="Manchester J.K."/>
            <person name="Coutinho P.M."/>
            <person name="Henrissat B."/>
            <person name="Fulton R."/>
            <person name="Latreille P."/>
            <person name="Kim K."/>
            <person name="Wilson R.K."/>
            <person name="Gordon J.I."/>
        </authorList>
    </citation>
    <scope>NUCLEOTIDE SEQUENCE [LARGE SCALE GENOMIC DNA]</scope>
    <source>
        <strain>ATCC 35061 / DSM 861 / OCM 144 / PS</strain>
    </source>
</reference>
<comment type="function">
    <text evidence="1">Involved in the maturation of [NiFe] hydrogenases. Required for nickel insertion into the metal center of the hydrogenase.</text>
</comment>
<comment type="similarity">
    <text evidence="1">Belongs to the HypA/HybF family.</text>
</comment>
<keyword id="KW-0479">Metal-binding</keyword>
<keyword id="KW-0533">Nickel</keyword>
<keyword id="KW-0862">Zinc</keyword>
<accession>A5UJD5</accession>
<proteinExistence type="inferred from homology"/>
<protein>
    <recommendedName>
        <fullName evidence="1">Hydrogenase maturation factor HypA</fullName>
    </recommendedName>
</protein>
<feature type="chain" id="PRO_1000023840" description="Hydrogenase maturation factor HypA">
    <location>
        <begin position="1"/>
        <end position="125"/>
    </location>
</feature>
<feature type="binding site" evidence="1">
    <location>
        <position position="2"/>
    </location>
    <ligand>
        <name>Ni(2+)</name>
        <dbReference type="ChEBI" id="CHEBI:49786"/>
    </ligand>
</feature>
<feature type="binding site" evidence="1">
    <location>
        <position position="73"/>
    </location>
    <ligand>
        <name>Zn(2+)</name>
        <dbReference type="ChEBI" id="CHEBI:29105"/>
    </ligand>
</feature>
<feature type="binding site" evidence="1">
    <location>
        <position position="76"/>
    </location>
    <ligand>
        <name>Zn(2+)</name>
        <dbReference type="ChEBI" id="CHEBI:29105"/>
    </ligand>
</feature>
<feature type="binding site" evidence="1">
    <location>
        <position position="96"/>
    </location>
    <ligand>
        <name>Zn(2+)</name>
        <dbReference type="ChEBI" id="CHEBI:29105"/>
    </ligand>
</feature>
<feature type="binding site" evidence="1">
    <location>
        <position position="99"/>
    </location>
    <ligand>
        <name>Zn(2+)</name>
        <dbReference type="ChEBI" id="CHEBI:29105"/>
    </ligand>
</feature>
<organism>
    <name type="scientific">Methanobrevibacter smithii (strain ATCC 35061 / DSM 861 / OCM 144 / PS)</name>
    <dbReference type="NCBI Taxonomy" id="420247"/>
    <lineage>
        <taxon>Archaea</taxon>
        <taxon>Methanobacteriati</taxon>
        <taxon>Methanobacteriota</taxon>
        <taxon>Methanomada group</taxon>
        <taxon>Methanobacteria</taxon>
        <taxon>Methanobacteriales</taxon>
        <taxon>Methanobacteriaceae</taxon>
        <taxon>Methanobrevibacter</taxon>
    </lineage>
</organism>
<dbReference type="EMBL" id="CP000678">
    <property type="protein sequence ID" value="ABQ86313.1"/>
    <property type="molecule type" value="Genomic_DNA"/>
</dbReference>
<dbReference type="RefSeq" id="WP_011953685.1">
    <property type="nucleotide sequence ID" value="NZ_CP117965.1"/>
</dbReference>
<dbReference type="SMR" id="A5UJD5"/>
<dbReference type="STRING" id="420247.Msm_0108"/>
<dbReference type="EnsemblBacteria" id="ABQ86313">
    <property type="protein sequence ID" value="ABQ86313"/>
    <property type="gene ID" value="Msm_0108"/>
</dbReference>
<dbReference type="GeneID" id="78816733"/>
<dbReference type="KEGG" id="msi:Msm_0108"/>
<dbReference type="PATRIC" id="fig|420247.28.peg.112"/>
<dbReference type="eggNOG" id="arCOG04426">
    <property type="taxonomic scope" value="Archaea"/>
</dbReference>
<dbReference type="HOGENOM" id="CLU_126929_2_0_2"/>
<dbReference type="Proteomes" id="UP000001992">
    <property type="component" value="Chromosome"/>
</dbReference>
<dbReference type="GO" id="GO:0016151">
    <property type="term" value="F:nickel cation binding"/>
    <property type="evidence" value="ECO:0007669"/>
    <property type="project" value="UniProtKB-UniRule"/>
</dbReference>
<dbReference type="GO" id="GO:0008270">
    <property type="term" value="F:zinc ion binding"/>
    <property type="evidence" value="ECO:0007669"/>
    <property type="project" value="UniProtKB-UniRule"/>
</dbReference>
<dbReference type="GO" id="GO:0051604">
    <property type="term" value="P:protein maturation"/>
    <property type="evidence" value="ECO:0007669"/>
    <property type="project" value="InterPro"/>
</dbReference>
<dbReference type="GO" id="GO:0036211">
    <property type="term" value="P:protein modification process"/>
    <property type="evidence" value="ECO:0007669"/>
    <property type="project" value="UniProtKB-UniRule"/>
</dbReference>
<dbReference type="Gene3D" id="3.30.2320.80">
    <property type="match status" value="1"/>
</dbReference>
<dbReference type="HAMAP" id="MF_00213">
    <property type="entry name" value="HypA_HybF"/>
    <property type="match status" value="1"/>
</dbReference>
<dbReference type="InterPro" id="IPR020538">
    <property type="entry name" value="Hydgase_Ni_incorp_HypA/HybF_CS"/>
</dbReference>
<dbReference type="InterPro" id="IPR000688">
    <property type="entry name" value="HypA/HybF"/>
</dbReference>
<dbReference type="NCBIfam" id="TIGR00100">
    <property type="entry name" value="hypA"/>
    <property type="match status" value="1"/>
</dbReference>
<dbReference type="NCBIfam" id="NF001976">
    <property type="entry name" value="PRK00762.1"/>
    <property type="match status" value="1"/>
</dbReference>
<dbReference type="PANTHER" id="PTHR34535">
    <property type="entry name" value="HYDROGENASE MATURATION FACTOR HYPA"/>
    <property type="match status" value="1"/>
</dbReference>
<dbReference type="PANTHER" id="PTHR34535:SF3">
    <property type="entry name" value="HYDROGENASE MATURATION FACTOR HYPA"/>
    <property type="match status" value="1"/>
</dbReference>
<dbReference type="Pfam" id="PF01155">
    <property type="entry name" value="HypA"/>
    <property type="match status" value="1"/>
</dbReference>
<dbReference type="PIRSF" id="PIRSF004761">
    <property type="entry name" value="Hydrgn_mat_HypA"/>
    <property type="match status" value="1"/>
</dbReference>
<dbReference type="PROSITE" id="PS01249">
    <property type="entry name" value="HYPA"/>
    <property type="match status" value="1"/>
</dbReference>
<name>HYPA_METS3</name>
<evidence type="ECO:0000255" key="1">
    <source>
        <dbReference type="HAMAP-Rule" id="MF_00213"/>
    </source>
</evidence>
<sequence>MHELSMAQGIINAVIDTAESNNATEVTEVGIEIGRLAMINPEQLRFMLSVLVENTIVEDADIKIEEIPVEINCPECGFKGVAELDDKDHYAPIVECPKCGNKRISILNGKDCVVKNIVIEKPDDD</sequence>